<dbReference type="EC" id="2.4.1.87" evidence="2"/>
<dbReference type="EMBL" id="DQ985357">
    <property type="protein sequence ID" value="ABL85466.1"/>
    <property type="molecule type" value="mRNA"/>
</dbReference>
<dbReference type="SMR" id="A1YGR6"/>
<dbReference type="CAZy" id="GT6">
    <property type="family name" value="Glycosyltransferase Family 6"/>
</dbReference>
<dbReference type="GlyCosmos" id="A1YGR6">
    <property type="glycosylation" value="2 sites, No reported glycans"/>
</dbReference>
<dbReference type="BRENDA" id="2.4.1.87">
    <property type="organism ID" value="3073"/>
</dbReference>
<dbReference type="UniPathway" id="UPA00378"/>
<dbReference type="GO" id="GO:0031985">
    <property type="term" value="C:Golgi cisterna"/>
    <property type="evidence" value="ECO:0000250"/>
    <property type="project" value="UniProtKB"/>
</dbReference>
<dbReference type="GO" id="GO:0032580">
    <property type="term" value="C:Golgi cisterna membrane"/>
    <property type="evidence" value="ECO:0007669"/>
    <property type="project" value="UniProtKB-SubCell"/>
</dbReference>
<dbReference type="GO" id="GO:0031982">
    <property type="term" value="C:vesicle"/>
    <property type="evidence" value="ECO:0007669"/>
    <property type="project" value="TreeGrafter"/>
</dbReference>
<dbReference type="GO" id="GO:0046872">
    <property type="term" value="F:metal ion binding"/>
    <property type="evidence" value="ECO:0007669"/>
    <property type="project" value="UniProtKB-KW"/>
</dbReference>
<dbReference type="GO" id="GO:0047276">
    <property type="term" value="F:N-acetyllactosaminide 3-alpha-galactosyltransferase activity"/>
    <property type="evidence" value="ECO:0007669"/>
    <property type="project" value="UniProtKB-EC"/>
</dbReference>
<dbReference type="GO" id="GO:0005975">
    <property type="term" value="P:carbohydrate metabolic process"/>
    <property type="evidence" value="ECO:0007669"/>
    <property type="project" value="InterPro"/>
</dbReference>
<dbReference type="GO" id="GO:0030259">
    <property type="term" value="P:lipid glycosylation"/>
    <property type="evidence" value="ECO:0007669"/>
    <property type="project" value="TreeGrafter"/>
</dbReference>
<dbReference type="GO" id="GO:0006486">
    <property type="term" value="P:protein glycosylation"/>
    <property type="evidence" value="ECO:0007669"/>
    <property type="project" value="UniProtKB-UniPathway"/>
</dbReference>
<dbReference type="CDD" id="cd02515">
    <property type="entry name" value="Glyco_transf_6"/>
    <property type="match status" value="1"/>
</dbReference>
<dbReference type="FunFam" id="3.90.550.10:FF:000022">
    <property type="entry name" value="Histo-blood group ABO system transferase"/>
    <property type="match status" value="1"/>
</dbReference>
<dbReference type="Gene3D" id="3.90.550.10">
    <property type="entry name" value="Spore Coat Polysaccharide Biosynthesis Protein SpsA, Chain A"/>
    <property type="match status" value="1"/>
</dbReference>
<dbReference type="InterPro" id="IPR005076">
    <property type="entry name" value="Glyco_trans_6"/>
</dbReference>
<dbReference type="InterPro" id="IPR029044">
    <property type="entry name" value="Nucleotide-diphossugar_trans"/>
</dbReference>
<dbReference type="PANTHER" id="PTHR10462">
    <property type="entry name" value="GLYCOSYLTRANSFERASE-RELATED"/>
    <property type="match status" value="1"/>
</dbReference>
<dbReference type="PANTHER" id="PTHR10462:SF26">
    <property type="entry name" value="N-ACETYLLACTOSAMINIDE ALPHA-1,3-GALACTOSYLTRANSFERASE"/>
    <property type="match status" value="1"/>
</dbReference>
<dbReference type="Pfam" id="PF03414">
    <property type="entry name" value="Glyco_transf_6"/>
    <property type="match status" value="1"/>
</dbReference>
<dbReference type="SUPFAM" id="SSF53448">
    <property type="entry name" value="Nucleotide-diphospho-sugar transferases"/>
    <property type="match status" value="1"/>
</dbReference>
<keyword id="KW-0325">Glycoprotein</keyword>
<keyword id="KW-0328">Glycosyltransferase</keyword>
<keyword id="KW-0333">Golgi apparatus</keyword>
<keyword id="KW-0464">Manganese</keyword>
<keyword id="KW-0472">Membrane</keyword>
<keyword id="KW-0479">Metal-binding</keyword>
<keyword id="KW-0735">Signal-anchor</keyword>
<keyword id="KW-0808">Transferase</keyword>
<keyword id="KW-0812">Transmembrane</keyword>
<keyword id="KW-1133">Transmembrane helix</keyword>
<gene>
    <name type="primary">GGTA1</name>
</gene>
<protein>
    <recommendedName>
        <fullName>N-acetyllactosaminide alpha-1,3-galactosyltransferase</fullName>
        <ecNumber evidence="2">2.4.1.87</ecNumber>
    </recommendedName>
    <alternativeName>
        <fullName>UDP-galactose:beta-D-galactosyl-1,4-N-acetyl-D-glucosaminide alpha-1,3-galactosyltransferase</fullName>
        <shortName>Galactosyltransferase</shortName>
    </alternativeName>
</protein>
<proteinExistence type="evidence at transcript level"/>
<sequence length="376" mass="44381">MNVKGKAILSMLVASTVIVVFWEYINSSEGSFLWIYHSKNPEVGDVRAPMGWWFPSWFNNGTHIYQEEEEDVDKEKGRKKEQREKDDREELQLWDWFTPEKRPEVVTVTSWKAPVVWEGTYNSAILENYYAKQKITVGLTVFAIGKYLEYYLEEFIASADRYFMVGHKVIFYIMVNNVSRMPPLELGPLRSFEVFEIKAEKRWQDVSMMRMKIIGEHILTHIQHEVDFLFCMDVDQVFQDNFGVETLGESVAQLQAWWYKADPNEFTYERREKSAAYIPFGQGDFYYHAAIFGGTPIRVLNITQECFKGILQDKKNDIEANWHDESHLNKYFLVNKPSKILSPEYCWDYQIGLPSDIKIVKISWQTKEYHLVRNNV</sequence>
<name>GGTA1_LORTA</name>
<comment type="function">
    <text evidence="1">Synthesizes the galactose-alpha(1,3)-galactose group by catalyzing the transfer of a galactose residue, with an alpha-1,3 linkage, on terminal lactosaminide (Gal-beta-1,4-GlcNAc-R) disaccharide borne by a glycoprotein or a glycolipid. Preferentially glycosylates proteins, can synthesize galactose-alpha(1,3)-galactose on glycoproteins but cannot synthesize the glycolipid called isogloboside 3 (iGb3) (By similarity).</text>
</comment>
<comment type="catalytic activity">
    <reaction evidence="2">
        <text>a beta-D-galactosyl-(1-&gt;4)-N-acetyl-beta-D-glucosaminyl derivative + UDP-alpha-D-galactose = an alpha-D-galactosyl-(1-&gt;3)-beta-D-galactosyl-(1-&gt;4)-N-acetyl-beta-D-glucosaminyl derivative + UDP + H(+)</text>
        <dbReference type="Rhea" id="RHEA:13013"/>
        <dbReference type="ChEBI" id="CHEBI:15378"/>
        <dbReference type="ChEBI" id="CHEBI:58223"/>
        <dbReference type="ChEBI" id="CHEBI:66914"/>
        <dbReference type="ChEBI" id="CHEBI:133507"/>
        <dbReference type="ChEBI" id="CHEBI:138024"/>
        <dbReference type="EC" id="2.4.1.87"/>
    </reaction>
</comment>
<comment type="cofactor">
    <cofactor evidence="2">
        <name>Mn(2+)</name>
        <dbReference type="ChEBI" id="CHEBI:29035"/>
    </cofactor>
    <text evidence="2">Binds 1 Mn(2+) ion per subunit.</text>
</comment>
<comment type="pathway">
    <text evidence="2">Protein modification; protein glycosylation.</text>
</comment>
<comment type="subcellular location">
    <subcellularLocation>
        <location evidence="1">Golgi apparatus</location>
        <location evidence="1">Golgi stack membrane</location>
        <topology evidence="1">Single-pass type II membrane protein</topology>
    </subcellularLocation>
    <text evidence="1">Membrane-bound form in trans cisternae of Golgi.</text>
</comment>
<comment type="domain">
    <text evidence="1">The conserved DXD motif is involved in cofactor binding. The manganese ion interacts with the beta-phosphate group of UDP and may also have a role in catalysis (By similarity).</text>
</comment>
<comment type="similarity">
    <text evidence="4">Belongs to the glycosyltransferase 6 family.</text>
</comment>
<reference key="1">
    <citation type="journal article" date="2007" name="Proc. Natl. Acad. Sci. U.S.A.">
        <title>Functionally important glycosyltransferase gain and loss during catarrhine primate emergence.</title>
        <authorList>
            <person name="Koike C."/>
            <person name="Uddin M."/>
            <person name="Wildman D.E."/>
            <person name="Gray E.A."/>
            <person name="Trucco M."/>
            <person name="Starzl T.E."/>
            <person name="Goodman M."/>
        </authorList>
    </citation>
    <scope>NUCLEOTIDE SEQUENCE [MRNA]</scope>
</reference>
<feature type="chain" id="PRO_0000333703" description="N-acetyllactosaminide alpha-1,3-galactosyltransferase">
    <location>
        <begin position="1"/>
        <end position="376"/>
    </location>
</feature>
<feature type="topological domain" description="Cytoplasmic" evidence="3">
    <location>
        <begin position="1"/>
        <end position="6"/>
    </location>
</feature>
<feature type="transmembrane region" description="Helical; Signal-anchor for type II membrane protein" evidence="3">
    <location>
        <begin position="7"/>
        <end position="25"/>
    </location>
</feature>
<feature type="topological domain" description="Lumenal" evidence="3">
    <location>
        <begin position="26"/>
        <end position="376"/>
    </location>
</feature>
<feature type="active site" description="Nucleophile" evidence="2">
    <location>
        <position position="325"/>
    </location>
</feature>
<feature type="binding site" evidence="2">
    <location>
        <begin position="142"/>
        <end position="147"/>
    </location>
    <ligand>
        <name>substrate</name>
    </ligand>
</feature>
<feature type="binding site" evidence="2">
    <location>
        <begin position="233"/>
        <end position="235"/>
    </location>
    <ligand>
        <name>substrate</name>
    </ligand>
</feature>
<feature type="binding site" evidence="2">
    <location>
        <position position="233"/>
    </location>
    <ligand>
        <name>Mn(2+)</name>
        <dbReference type="ChEBI" id="CHEBI:29035"/>
    </ligand>
</feature>
<feature type="binding site" evidence="2">
    <location>
        <position position="235"/>
    </location>
    <ligand>
        <name>Mn(2+)</name>
        <dbReference type="ChEBI" id="CHEBI:29035"/>
    </ligand>
</feature>
<feature type="binding site" evidence="2">
    <location>
        <begin position="255"/>
        <end position="258"/>
    </location>
    <ligand>
        <name>substrate</name>
    </ligand>
</feature>
<feature type="binding site" evidence="2">
    <location>
        <position position="267"/>
    </location>
    <ligand>
        <name>substrate</name>
    </ligand>
</feature>
<feature type="binding site" evidence="2">
    <location>
        <begin position="367"/>
        <end position="373"/>
    </location>
    <ligand>
        <name>substrate</name>
    </ligand>
</feature>
<feature type="glycosylation site" description="N-linked (GlcNAc...) asparagine" evidence="3">
    <location>
        <position position="60"/>
    </location>
</feature>
<feature type="glycosylation site" description="N-linked (GlcNAc...) asparagine" evidence="3">
    <location>
        <position position="301"/>
    </location>
</feature>
<accession>A1YGR6</accession>
<evidence type="ECO:0000250" key="1"/>
<evidence type="ECO:0000250" key="2">
    <source>
        <dbReference type="UniProtKB" id="P14769"/>
    </source>
</evidence>
<evidence type="ECO:0000255" key="3"/>
<evidence type="ECO:0000305" key="4"/>
<organism>
    <name type="scientific">Loris tardigradus</name>
    <name type="common">Slender loris</name>
    <dbReference type="NCBI Taxonomy" id="9468"/>
    <lineage>
        <taxon>Eukaryota</taxon>
        <taxon>Metazoa</taxon>
        <taxon>Chordata</taxon>
        <taxon>Craniata</taxon>
        <taxon>Vertebrata</taxon>
        <taxon>Euteleostomi</taxon>
        <taxon>Mammalia</taxon>
        <taxon>Eutheria</taxon>
        <taxon>Euarchontoglires</taxon>
        <taxon>Primates</taxon>
        <taxon>Strepsirrhini</taxon>
        <taxon>Lorisiformes</taxon>
        <taxon>Lorisidae</taxon>
        <taxon>Loris</taxon>
    </lineage>
</organism>